<accession>Q91145</accession>
<organism>
    <name type="scientific">Notophthalmus viridescens</name>
    <name type="common">Eastern newt</name>
    <name type="synonym">Triturus viridescens</name>
    <dbReference type="NCBI Taxonomy" id="8316"/>
    <lineage>
        <taxon>Eukaryota</taxon>
        <taxon>Metazoa</taxon>
        <taxon>Chordata</taxon>
        <taxon>Craniata</taxon>
        <taxon>Vertebrata</taxon>
        <taxon>Euteleostomi</taxon>
        <taxon>Amphibia</taxon>
        <taxon>Batrachia</taxon>
        <taxon>Caudata</taxon>
        <taxon>Salamandroidea</taxon>
        <taxon>Salamandridae</taxon>
        <taxon>Pleurodelinae</taxon>
        <taxon>Notophthalmus</taxon>
    </lineage>
</organism>
<feature type="chain" id="PRO_0000059404" description="Collagen alpha-1(XII) chain">
    <location>
        <begin position="1" status="less than"/>
        <end position="929" status="greater than"/>
    </location>
</feature>
<feature type="domain" description="VWFA 1" evidence="3">
    <location>
        <begin position="1" status="less than"/>
        <end position="49"/>
    </location>
</feature>
<feature type="domain" description="Fibronectin type-III 1" evidence="4">
    <location>
        <begin position="67"/>
        <end position="156"/>
    </location>
</feature>
<feature type="domain" description="Fibronectin type-III 2" evidence="4">
    <location>
        <begin position="158"/>
        <end position="250"/>
    </location>
</feature>
<feature type="domain" description="Fibronectin type-III 3" evidence="4">
    <location>
        <begin position="251"/>
        <end position="340"/>
    </location>
</feature>
<feature type="domain" description="Fibronectin type-III 4" evidence="4">
    <location>
        <begin position="342"/>
        <end position="432"/>
    </location>
</feature>
<feature type="domain" description="Fibronectin type-III 5" evidence="4">
    <location>
        <begin position="434"/>
        <end position="521"/>
    </location>
</feature>
<feature type="domain" description="Fibronectin type-III 6" evidence="4">
    <location>
        <begin position="523"/>
        <end position="613"/>
    </location>
</feature>
<feature type="domain" description="VWFA 2" evidence="3">
    <location>
        <begin position="633"/>
        <end position="805"/>
    </location>
</feature>
<feature type="domain" description="Fibronectin type-III 7" evidence="4">
    <location>
        <begin position="821"/>
        <end position="910"/>
    </location>
</feature>
<feature type="glycosylation site" description="N-linked (GlcNAc...) asparagine" evidence="2">
    <location>
        <position position="98"/>
    </location>
</feature>
<feature type="glycosylation site" description="O-linked (Xyl...) (chondroitin sulfate) serine" evidence="2">
    <location>
        <position position="231"/>
    </location>
</feature>
<feature type="glycosylation site" description="O-linked (Xyl...) (chondroitin sulfate) serine" evidence="2">
    <location>
        <position position="324"/>
    </location>
</feature>
<feature type="glycosylation site" description="O-linked (Xyl...) (chondroitin sulfate) serine" evidence="2">
    <location>
        <position position="415"/>
    </location>
</feature>
<feature type="non-terminal residue">
    <location>
        <position position="1"/>
    </location>
</feature>
<feature type="non-terminal residue">
    <location>
        <position position="929"/>
    </location>
</feature>
<name>COCA1_NOTVI</name>
<evidence type="ECO:0000250" key="1"/>
<evidence type="ECO:0000255" key="2"/>
<evidence type="ECO:0000255" key="3">
    <source>
        <dbReference type="PROSITE-ProRule" id="PRU00219"/>
    </source>
</evidence>
<evidence type="ECO:0000255" key="4">
    <source>
        <dbReference type="PROSITE-ProRule" id="PRU00316"/>
    </source>
</evidence>
<evidence type="ECO:0000305" key="5"/>
<keyword id="KW-0130">Cell adhesion</keyword>
<keyword id="KW-0176">Collagen</keyword>
<keyword id="KW-1015">Disulfide bond</keyword>
<keyword id="KW-0272">Extracellular matrix</keyword>
<keyword id="KW-0325">Glycoprotein</keyword>
<keyword id="KW-0654">Proteoglycan</keyword>
<keyword id="KW-0677">Repeat</keyword>
<keyword id="KW-0964">Secreted</keyword>
<reference key="1">
    <citation type="journal article" date="1995" name="Dev. Biol.">
        <title>Monoclonal antibody MT2 identifies the urodele alpha 1 chain of type XII collagen, a developmentally regulated extracellular matrix protein in regenerating newt limbs.</title>
        <authorList>
            <person name="Wei Y."/>
            <person name="Yang E.V."/>
            <person name="Klatt K.P."/>
            <person name="Tassava R.A."/>
        </authorList>
    </citation>
    <scope>NUCLEOTIDE SEQUENCE [MRNA]</scope>
</reference>
<sequence length="929" mass="101647">DVEIFAVGVKDAVRSELEAIATPPTATHVYTVEDFDAFQRISFELTQSIWLRIEQELKSIKVKSLTPPRDLSFAEVTSSSFRVSWSPAAEDAIAYLVNYTVALGGEEFVVSVPAPTTSTVLTNLFPKTTYEVRVVAEYPEGESPPLKGEETTLEVRGAPRNLRVTDETTDSFKVGWTPAPGNVLRYRIAYRPVAGGERKEVTVQGNERATTLYNLFPDTKYHVSGVPEYQSGPGTALNGNGATEEVVGEPKNLRVSEPTTSTAMRLTWDKAPGKVQRYLRNLHSRSAGGDIKEVTVKGDTSTTVLKELDPGTAYTLSVNPLYASGAGTAVTGEGATLQERGSPRDLIIKDITDTTIGTSWTAAPGMVRGYRIAWQSLFDDKTGENHVPGDTTNTVLRNLDPETKYRLSVYANYASGEGDPLSGEATTEASPDGKIVKISEETETTMKATWQPAPGNVLNYRVVYRPRAGGRQIVAKVPPAVTSTVLRRLTPLTTYDISVIPVYKEGDGKTRQGSGTTLSPFNAPRSIKTSEPTRSTFRVTWEPAPGEVKGYKITFHPEGDDGYLGEMMVGPYDSTVVLEELRARTSYKVNVFGVFDDGQSPPLIGHETTTLRDAPRSPIPSSGLDCTTKAQADIVLLVDGSWSIGRPNFKIVRNFISRVVEVFDIGSDRVQIAVSQYSGDPRTEWQLNTHKTKKSLMDAVANLPYKGGNTNTGSALKFILENNFRPGVGMREKARKIAILLTDGKSQDDIVAPSKRYADEGIELYAVGIKNADENELKEIASDPDELYMYNVADFSLLTNIVNDLTENVCNSVKGPGGLNPPSNLVTSEPTPRSFRVTWVPPSQSVERFKVEYYPVAGGRPQEVYVRGTQTTTVLVGLKPETEYYVNVYSVEGNEISEPLAGTETTLPIPSVRNMNLYDIGTTTMRVKW</sequence>
<dbReference type="EMBL" id="U19494">
    <property type="protein sequence ID" value="AAA80217.1"/>
    <property type="molecule type" value="mRNA"/>
</dbReference>
<dbReference type="PIR" id="I51027">
    <property type="entry name" value="I51027"/>
</dbReference>
<dbReference type="SMR" id="Q91145"/>
<dbReference type="GO" id="GO:0005581">
    <property type="term" value="C:collagen trimer"/>
    <property type="evidence" value="ECO:0007669"/>
    <property type="project" value="UniProtKB-KW"/>
</dbReference>
<dbReference type="GO" id="GO:0005576">
    <property type="term" value="C:extracellular region"/>
    <property type="evidence" value="ECO:0007669"/>
    <property type="project" value="UniProtKB-KW"/>
</dbReference>
<dbReference type="GO" id="GO:0007155">
    <property type="term" value="P:cell adhesion"/>
    <property type="evidence" value="ECO:0007669"/>
    <property type="project" value="UniProtKB-KW"/>
</dbReference>
<dbReference type="CDD" id="cd00063">
    <property type="entry name" value="FN3"/>
    <property type="match status" value="7"/>
</dbReference>
<dbReference type="CDD" id="cd01482">
    <property type="entry name" value="vWA_collagen_alphaI-XII-like"/>
    <property type="match status" value="1"/>
</dbReference>
<dbReference type="FunFam" id="2.60.40.10:FF:000018">
    <property type="entry name" value="collagen alpha-1(XII) chain isoform X1"/>
    <property type="match status" value="5"/>
</dbReference>
<dbReference type="FunFam" id="2.60.40.10:FF:000234">
    <property type="entry name" value="Collagen, type XII, alpha 1"/>
    <property type="match status" value="1"/>
</dbReference>
<dbReference type="FunFam" id="3.40.50.410:FF:000001">
    <property type="entry name" value="Collagen, type XII, alpha 1"/>
    <property type="match status" value="1"/>
</dbReference>
<dbReference type="Gene3D" id="2.60.40.10">
    <property type="entry name" value="Immunoglobulins"/>
    <property type="match status" value="7"/>
</dbReference>
<dbReference type="Gene3D" id="3.40.50.410">
    <property type="entry name" value="von Willebrand factor, type A domain"/>
    <property type="match status" value="2"/>
</dbReference>
<dbReference type="InterPro" id="IPR050991">
    <property type="entry name" value="ECM_Regulatory_Proteins"/>
</dbReference>
<dbReference type="InterPro" id="IPR003961">
    <property type="entry name" value="FN3_dom"/>
</dbReference>
<dbReference type="InterPro" id="IPR036116">
    <property type="entry name" value="FN3_sf"/>
</dbReference>
<dbReference type="InterPro" id="IPR013783">
    <property type="entry name" value="Ig-like_fold"/>
</dbReference>
<dbReference type="InterPro" id="IPR002035">
    <property type="entry name" value="VWF_A"/>
</dbReference>
<dbReference type="InterPro" id="IPR036465">
    <property type="entry name" value="vWFA_dom_sf"/>
</dbReference>
<dbReference type="PANTHER" id="PTHR46708:SF2">
    <property type="entry name" value="FIBRONECTIN TYPE-III DOMAIN-CONTAINING PROTEIN"/>
    <property type="match status" value="1"/>
</dbReference>
<dbReference type="PANTHER" id="PTHR46708">
    <property type="entry name" value="TENASCIN"/>
    <property type="match status" value="1"/>
</dbReference>
<dbReference type="Pfam" id="PF00041">
    <property type="entry name" value="fn3"/>
    <property type="match status" value="7"/>
</dbReference>
<dbReference type="Pfam" id="PF00092">
    <property type="entry name" value="VWA"/>
    <property type="match status" value="2"/>
</dbReference>
<dbReference type="PRINTS" id="PR00453">
    <property type="entry name" value="VWFADOMAIN"/>
</dbReference>
<dbReference type="SMART" id="SM00060">
    <property type="entry name" value="FN3"/>
    <property type="match status" value="7"/>
</dbReference>
<dbReference type="SMART" id="SM00327">
    <property type="entry name" value="VWA"/>
    <property type="match status" value="1"/>
</dbReference>
<dbReference type="SUPFAM" id="SSF49265">
    <property type="entry name" value="Fibronectin type III"/>
    <property type="match status" value="5"/>
</dbReference>
<dbReference type="SUPFAM" id="SSF53300">
    <property type="entry name" value="vWA-like"/>
    <property type="match status" value="2"/>
</dbReference>
<dbReference type="PROSITE" id="PS50853">
    <property type="entry name" value="FN3"/>
    <property type="match status" value="7"/>
</dbReference>
<dbReference type="PROSITE" id="PS50234">
    <property type="entry name" value="VWFA"/>
    <property type="match status" value="2"/>
</dbReference>
<proteinExistence type="evidence at transcript level"/>
<protein>
    <recommendedName>
        <fullName>Collagen alpha-1(XII) chain</fullName>
    </recommendedName>
</protein>
<comment type="function">
    <text evidence="1">Type XII collagen interacts with type I collagen-containing fibrils, the COL1 domain could be associated with the surface of the fibrils, and the COL2 and NC3 domains may be localized in the perifibrillar matrix (By similarity). Could play a developmental role in regeneration.</text>
</comment>
<comment type="subunit">
    <text evidence="1">Trimer of identical chains each containing 190 kDa of non-triple-helical sequences.</text>
</comment>
<comment type="subcellular location">
    <subcellularLocation>
        <location evidence="1">Secreted</location>
        <location evidence="1">Extracellular space</location>
        <location evidence="1">Extracellular matrix</location>
    </subcellularLocation>
</comment>
<comment type="developmental stage">
    <text>Expression starts at 3 days after amputation in cells of the basal layer of the wound epithelium. At day 10, expression is found in both the basal wound epithelial cells and the distal mesenchyme cells. At mid-bud and late-bud blastema stages, wound epithelium expression has decreased, whereas the mesenchyme remains strongly active in transcription and showed a tendency toward distal regionalization. Condensing cartilage shows no signal. Finally, at the late digit stage, expression becomes largely restricted to the perichondrium.</text>
</comment>
<comment type="PTM">
    <text evidence="1">The triple-helical tail is stabilized by disulfide bonds at each end.</text>
</comment>
<comment type="PTM">
    <text evidence="1">Prolines at the third position of the tripeptide repeating unit (G-X-Y) are hydroxylated in some or all of the chains.</text>
</comment>
<comment type="similarity">
    <text evidence="5">Belongs to the fibril-associated collagens with interrupted helices (FACIT) family.</text>
</comment>